<reference key="1">
    <citation type="journal article" date="1989" name="J. Bacteriol.">
        <title>Molecular structure and immunity specificity of colicin E6, an evolutionary intermediate between E-group colicins and cloacin DF13.</title>
        <authorList>
            <person name="Akutsu A."/>
            <person name="Masaki H."/>
            <person name="Ohta T."/>
        </authorList>
    </citation>
    <scope>NUCLEOTIDE SEQUENCE [GENOMIC DNA]</scope>
</reference>
<reference key="2">
    <citation type="journal article" date="1989" name="Mol. Gen. Genet.">
        <title>Nucleotide sequences from the colicin E5, E6 and E9 operons: presence of a degenerate transposon-like structure in the ColE9-J plasmid.</title>
        <authorList>
            <person name="Lau P.C.K."/>
            <person name="Condie J.A."/>
        </authorList>
    </citation>
    <scope>NUCLEOTIDE SEQUENCE [GENOMIC DNA] OF 377-551</scope>
</reference>
<comment type="function">
    <text>Inactivates ribosomes by hydrolyzing 16S RNA in 30S ribosomes at a specific site.</text>
</comment>
<comment type="function">
    <text>Colicins are polypeptide toxins produced by and active against E.coli and closely related bacteria.</text>
</comment>
<comment type="similarity">
    <text evidence="3">Belongs to the cloacin colicin family.</text>
</comment>
<proteinExistence type="inferred from homology"/>
<organism>
    <name type="scientific">Escherichia coli</name>
    <dbReference type="NCBI Taxonomy" id="562"/>
    <lineage>
        <taxon>Bacteria</taxon>
        <taxon>Pseudomonadati</taxon>
        <taxon>Pseudomonadota</taxon>
        <taxon>Gammaproteobacteria</taxon>
        <taxon>Enterobacterales</taxon>
        <taxon>Enterobacteriaceae</taxon>
        <taxon>Escherichia</taxon>
    </lineage>
</organism>
<keyword id="KW-0044">Antibiotic</keyword>
<keyword id="KW-0929">Antimicrobial</keyword>
<keyword id="KW-0078">Bacteriocin</keyword>
<keyword id="KW-0255">Endonuclease</keyword>
<keyword id="KW-0378">Hydrolase</keyword>
<keyword id="KW-0540">Nuclease</keyword>
<keyword id="KW-0614">Plasmid</keyword>
<protein>
    <recommendedName>
        <fullName>Colicin-E6</fullName>
        <ecNumber>3.1.-.-</ecNumber>
    </recommendedName>
    <alternativeName>
        <fullName>Ribonuclease</fullName>
    </alternativeName>
</protein>
<feature type="chain" id="PRO_0000218678" description="Colicin-E6">
    <location>
        <begin position="1"/>
        <end position="551"/>
    </location>
</feature>
<feature type="region of interest" description="Disordered" evidence="2">
    <location>
        <begin position="1"/>
        <end position="74"/>
    </location>
</feature>
<feature type="region of interest" description="Disordered" evidence="2">
    <location>
        <begin position="244"/>
        <end position="269"/>
    </location>
</feature>
<feature type="region of interest" description="Disordered" evidence="2">
    <location>
        <begin position="293"/>
        <end position="317"/>
    </location>
</feature>
<feature type="region of interest" description="Disordered" evidence="2">
    <location>
        <begin position="406"/>
        <end position="501"/>
    </location>
</feature>
<feature type="region of interest" description="Ribosome inactivating activity">
    <location>
        <begin position="455"/>
        <end position="551"/>
    </location>
</feature>
<feature type="region of interest" description="Disordered" evidence="2">
    <location>
        <begin position="517"/>
        <end position="551"/>
    </location>
</feature>
<feature type="region of interest" description="Binding of immunity protein" evidence="1">
    <location>
        <begin position="530"/>
        <end position="551"/>
    </location>
</feature>
<feature type="compositionally biased region" description="Gly residues" evidence="2">
    <location>
        <begin position="20"/>
        <end position="35"/>
    </location>
</feature>
<feature type="compositionally biased region" description="Low complexity" evidence="2">
    <location>
        <begin position="36"/>
        <end position="45"/>
    </location>
</feature>
<feature type="compositionally biased region" description="Gly residues" evidence="2">
    <location>
        <begin position="46"/>
        <end position="74"/>
    </location>
</feature>
<feature type="compositionally biased region" description="Basic and acidic residues" evidence="2">
    <location>
        <begin position="296"/>
        <end position="317"/>
    </location>
</feature>
<feature type="compositionally biased region" description="Basic and acidic residues" evidence="2">
    <location>
        <begin position="430"/>
        <end position="484"/>
    </location>
</feature>
<geneLocation type="plasmid">
    <name>ColE6-CT14</name>
</geneLocation>
<dbReference type="EC" id="3.1.-.-"/>
<dbReference type="EMBL" id="X15856">
    <property type="protein sequence ID" value="CAA33855.1"/>
    <property type="molecule type" value="Genomic_DNA"/>
</dbReference>
<dbReference type="EMBL" id="M31808">
    <property type="protein sequence ID" value="AAA23080.1"/>
    <property type="molecule type" value="Genomic_DNA"/>
</dbReference>
<dbReference type="PIR" id="PQ0030">
    <property type="entry name" value="PQ0030"/>
</dbReference>
<dbReference type="RefSeq" id="WP_052980126.1">
    <property type="nucleotide sequence ID" value="NZ_JBJCIO010000107.1"/>
</dbReference>
<dbReference type="SMR" id="P17999"/>
<dbReference type="GO" id="GO:0005727">
    <property type="term" value="C:extrachromosomal circular DNA"/>
    <property type="evidence" value="ECO:0007669"/>
    <property type="project" value="InterPro"/>
</dbReference>
<dbReference type="GO" id="GO:0004519">
    <property type="term" value="F:endonuclease activity"/>
    <property type="evidence" value="ECO:0007669"/>
    <property type="project" value="UniProtKB-KW"/>
</dbReference>
<dbReference type="GO" id="GO:0043022">
    <property type="term" value="F:ribosome binding"/>
    <property type="evidence" value="ECO:0007669"/>
    <property type="project" value="InterPro"/>
</dbReference>
<dbReference type="GO" id="GO:0003723">
    <property type="term" value="F:RNA binding"/>
    <property type="evidence" value="ECO:0007669"/>
    <property type="project" value="InterPro"/>
</dbReference>
<dbReference type="GO" id="GO:0042742">
    <property type="term" value="P:defense response to bacterium"/>
    <property type="evidence" value="ECO:0007669"/>
    <property type="project" value="UniProtKB-KW"/>
</dbReference>
<dbReference type="GO" id="GO:0031640">
    <property type="term" value="P:killing of cells of another organism"/>
    <property type="evidence" value="ECO:0007669"/>
    <property type="project" value="UniProtKB-KW"/>
</dbReference>
<dbReference type="Gene3D" id="3.10.380.10">
    <property type="entry name" value="Colicin E3-like ribonuclease domain"/>
    <property type="match status" value="1"/>
</dbReference>
<dbReference type="Gene3D" id="1.10.287.620">
    <property type="entry name" value="Helix Hairpins"/>
    <property type="match status" value="1"/>
</dbReference>
<dbReference type="Gene3D" id="1.20.5.740">
    <property type="entry name" value="Single helix bin"/>
    <property type="match status" value="1"/>
</dbReference>
<dbReference type="InterPro" id="IPR024575">
    <property type="entry name" value="Cloacin_colicin"/>
</dbReference>
<dbReference type="InterPro" id="IPR036725">
    <property type="entry name" value="ColE3_ribonuclease_sf"/>
</dbReference>
<dbReference type="InterPro" id="IPR009105">
    <property type="entry name" value="Colicin_E3_ribonuclease"/>
</dbReference>
<dbReference type="InterPro" id="IPR024566">
    <property type="entry name" value="Colicin_R_dom"/>
</dbReference>
<dbReference type="InterPro" id="IPR016128">
    <property type="entry name" value="Pyosin/cloacin_T_dom"/>
</dbReference>
<dbReference type="InterPro" id="IPR036302">
    <property type="entry name" value="Pyosin/cloacin_T_dom_sf"/>
</dbReference>
<dbReference type="Pfam" id="PF03515">
    <property type="entry name" value="Cloacin"/>
    <property type="match status" value="1"/>
</dbReference>
<dbReference type="Pfam" id="PF09000">
    <property type="entry name" value="Cytotoxic"/>
    <property type="match status" value="1"/>
</dbReference>
<dbReference type="Pfam" id="PF11570">
    <property type="entry name" value="E2R135"/>
    <property type="match status" value="1"/>
</dbReference>
<dbReference type="PRINTS" id="PR01295">
    <property type="entry name" value="CLOACIN"/>
</dbReference>
<dbReference type="SUPFAM" id="SSF69369">
    <property type="entry name" value="Cloacin translocation domain"/>
    <property type="match status" value="1"/>
</dbReference>
<dbReference type="SUPFAM" id="SSF69985">
    <property type="entry name" value="Colicin E3 receptor domain"/>
    <property type="match status" value="1"/>
</dbReference>
<dbReference type="SUPFAM" id="SSF63840">
    <property type="entry name" value="Ribonuclease domain of colicin E3"/>
    <property type="match status" value="1"/>
</dbReference>
<evidence type="ECO:0000250" key="1"/>
<evidence type="ECO:0000256" key="2">
    <source>
        <dbReference type="SAM" id="MobiDB-lite"/>
    </source>
</evidence>
<evidence type="ECO:0000305" key="3"/>
<sequence>MSGGDGRGHNTGAHSTSGNINGGPTGLGVGGGASDGSGWSSENNPWGGGSGSGIHWGGGSGHGNGGGNGNSGGGSGTGGNLSAVAAPVAFGFPALSTPGAGGLAVSISAGALSAAIADIMAALKGPFKFGLWGVALYGVLPSQIAKDDPNMMSKIVTSLPADDITESPVSSLPLDKATVNVNVRVVDDVKDERQNISVVSGVPMSVPVVDAKPTERPGVFTASIPGAPVLNISVNNSTPAVQTLSPGVTNNTDKDVRPAGFTQGGNTRDAVIRFPKDSGHNAVYVSVSDVLSPDQVKQRQDEENRRQQEWDATHPVEAAERNYERARAELNQANEDVARNQERQAKAVQVYNSRKSELDAANKTLADAIAEIKQFNRFAHDPMAGGHRMWQMAGLKAQRAQTDVNNKQAAFDAAAKEKSDADAALSSAMESRKKKEDKKRSAENKLNEEKNKPRKGVKDYGHDYHPDPKTEDIKGLGELKEGKPKTPKQGGGGKRARWYGDKGRKIYEWDSQHGELEGYRASDGQHLGSFEPKTGNQLKGPDPKRNIKKYL</sequence>
<name>CEA6_ECOLX</name>
<accession>P17999</accession>